<feature type="chain" id="PRO_0000137225" description="Translation initiation factor IF-2">
    <location>
        <begin position="1"/>
        <end position="900"/>
    </location>
</feature>
<feature type="domain" description="tr-type G">
    <location>
        <begin position="396"/>
        <end position="567"/>
    </location>
</feature>
<feature type="region of interest" description="Disordered" evidence="2">
    <location>
        <begin position="30"/>
        <end position="77"/>
    </location>
</feature>
<feature type="region of interest" description="Disordered" evidence="2">
    <location>
        <begin position="89"/>
        <end position="291"/>
    </location>
</feature>
<feature type="region of interest" description="G1" evidence="1">
    <location>
        <begin position="405"/>
        <end position="412"/>
    </location>
</feature>
<feature type="region of interest" description="G2" evidence="1">
    <location>
        <begin position="430"/>
        <end position="434"/>
    </location>
</feature>
<feature type="region of interest" description="G3" evidence="1">
    <location>
        <begin position="455"/>
        <end position="458"/>
    </location>
</feature>
<feature type="region of interest" description="G4" evidence="1">
    <location>
        <begin position="509"/>
        <end position="512"/>
    </location>
</feature>
<feature type="region of interest" description="G5" evidence="1">
    <location>
        <begin position="545"/>
        <end position="547"/>
    </location>
</feature>
<feature type="compositionally biased region" description="Low complexity" evidence="2">
    <location>
        <begin position="89"/>
        <end position="112"/>
    </location>
</feature>
<feature type="compositionally biased region" description="Pro residues" evidence="2">
    <location>
        <begin position="113"/>
        <end position="129"/>
    </location>
</feature>
<feature type="compositionally biased region" description="Low complexity" evidence="2">
    <location>
        <begin position="175"/>
        <end position="187"/>
    </location>
</feature>
<feature type="compositionally biased region" description="Gly residues" evidence="2">
    <location>
        <begin position="215"/>
        <end position="271"/>
    </location>
</feature>
<feature type="compositionally biased region" description="Basic residues" evidence="2">
    <location>
        <begin position="275"/>
        <end position="284"/>
    </location>
</feature>
<feature type="binding site" evidence="1">
    <location>
        <begin position="405"/>
        <end position="412"/>
    </location>
    <ligand>
        <name>GTP</name>
        <dbReference type="ChEBI" id="CHEBI:37565"/>
    </ligand>
</feature>
<feature type="binding site" evidence="1">
    <location>
        <begin position="455"/>
        <end position="459"/>
    </location>
    <ligand>
        <name>GTP</name>
        <dbReference type="ChEBI" id="CHEBI:37565"/>
    </ligand>
</feature>
<feature type="binding site" evidence="1">
    <location>
        <begin position="509"/>
        <end position="512"/>
    </location>
    <ligand>
        <name>GTP</name>
        <dbReference type="ChEBI" id="CHEBI:37565"/>
    </ligand>
</feature>
<comment type="function">
    <text evidence="1">One of the essential components for the initiation of protein synthesis. Protects formylmethionyl-tRNA from spontaneous hydrolysis and promotes its binding to the 30S ribosomal subunits. Also involved in the hydrolysis of GTP during the formation of the 70S ribosomal complex (By similarity).</text>
</comment>
<comment type="subcellular location">
    <subcellularLocation>
        <location evidence="1">Cytoplasm</location>
    </subcellularLocation>
</comment>
<comment type="similarity">
    <text evidence="3">Belongs to the TRAFAC class translation factor GTPase superfamily. Classic translation factor GTPase family. IF-2 subfamily.</text>
</comment>
<proteinExistence type="inferred from homology"/>
<name>IF2_MYCBO</name>
<keyword id="KW-0963">Cytoplasm</keyword>
<keyword id="KW-0342">GTP-binding</keyword>
<keyword id="KW-0396">Initiation factor</keyword>
<keyword id="KW-0547">Nucleotide-binding</keyword>
<keyword id="KW-0648">Protein biosynthesis</keyword>
<keyword id="KW-1185">Reference proteome</keyword>
<organism>
    <name type="scientific">Mycobacterium bovis (strain ATCC BAA-935 / AF2122/97)</name>
    <dbReference type="NCBI Taxonomy" id="233413"/>
    <lineage>
        <taxon>Bacteria</taxon>
        <taxon>Bacillati</taxon>
        <taxon>Actinomycetota</taxon>
        <taxon>Actinomycetes</taxon>
        <taxon>Mycobacteriales</taxon>
        <taxon>Mycobacteriaceae</taxon>
        <taxon>Mycobacterium</taxon>
        <taxon>Mycobacterium tuberculosis complex</taxon>
    </lineage>
</organism>
<protein>
    <recommendedName>
        <fullName>Translation initiation factor IF-2</fullName>
    </recommendedName>
</protein>
<evidence type="ECO:0000250" key="1"/>
<evidence type="ECO:0000256" key="2">
    <source>
        <dbReference type="SAM" id="MobiDB-lite"/>
    </source>
</evidence>
<evidence type="ECO:0000305" key="3"/>
<accession>P65132</accession>
<accession>A0A1R3Y2D6</accession>
<accession>P71613</accession>
<accession>X2BM52</accession>
<reference key="1">
    <citation type="journal article" date="2003" name="Proc. Natl. Acad. Sci. U.S.A.">
        <title>The complete genome sequence of Mycobacterium bovis.</title>
        <authorList>
            <person name="Garnier T."/>
            <person name="Eiglmeier K."/>
            <person name="Camus J.-C."/>
            <person name="Medina N."/>
            <person name="Mansoor H."/>
            <person name="Pryor M."/>
            <person name="Duthoy S."/>
            <person name="Grondin S."/>
            <person name="Lacroix C."/>
            <person name="Monsempe C."/>
            <person name="Simon S."/>
            <person name="Harris B."/>
            <person name="Atkin R."/>
            <person name="Doggett J."/>
            <person name="Mayes R."/>
            <person name="Keating L."/>
            <person name="Wheeler P.R."/>
            <person name="Parkhill J."/>
            <person name="Barrell B.G."/>
            <person name="Cole S.T."/>
            <person name="Gordon S.V."/>
            <person name="Hewinson R.G."/>
        </authorList>
    </citation>
    <scope>NUCLEOTIDE SEQUENCE [LARGE SCALE GENOMIC DNA]</scope>
    <source>
        <strain>ATCC BAA-935 / AF2122/97</strain>
    </source>
</reference>
<reference key="2">
    <citation type="journal article" date="2017" name="Genome Announc.">
        <title>Updated reference genome sequence and annotation of Mycobacterium bovis AF2122/97.</title>
        <authorList>
            <person name="Malone K.M."/>
            <person name="Farrell D."/>
            <person name="Stuber T.P."/>
            <person name="Schubert O.T."/>
            <person name="Aebersold R."/>
            <person name="Robbe-Austerman S."/>
            <person name="Gordon S.V."/>
        </authorList>
    </citation>
    <scope>NUCLEOTIDE SEQUENCE [LARGE SCALE GENOMIC DNA]</scope>
    <scope>GENOME REANNOTATION</scope>
    <source>
        <strain>ATCC BAA-935 / AF2122/97</strain>
    </source>
</reference>
<gene>
    <name type="primary">infB</name>
    <name type="ordered locus">BQ2027_MB2864C</name>
</gene>
<dbReference type="EMBL" id="LT708304">
    <property type="protein sequence ID" value="SIU01484.1"/>
    <property type="molecule type" value="Genomic_DNA"/>
</dbReference>
<dbReference type="RefSeq" id="NP_856509.1">
    <property type="nucleotide sequence ID" value="NC_002945.3"/>
</dbReference>
<dbReference type="RefSeq" id="WP_003899505.1">
    <property type="nucleotide sequence ID" value="NC_002945.4"/>
</dbReference>
<dbReference type="SMR" id="P65132"/>
<dbReference type="GeneID" id="45426826"/>
<dbReference type="KEGG" id="mbo:BQ2027_MB2864C"/>
<dbReference type="PATRIC" id="fig|233413.5.peg.3141"/>
<dbReference type="Proteomes" id="UP000001419">
    <property type="component" value="Chromosome"/>
</dbReference>
<dbReference type="GO" id="GO:0005829">
    <property type="term" value="C:cytosol"/>
    <property type="evidence" value="ECO:0007669"/>
    <property type="project" value="TreeGrafter"/>
</dbReference>
<dbReference type="GO" id="GO:0005525">
    <property type="term" value="F:GTP binding"/>
    <property type="evidence" value="ECO:0007669"/>
    <property type="project" value="UniProtKB-KW"/>
</dbReference>
<dbReference type="GO" id="GO:0003924">
    <property type="term" value="F:GTPase activity"/>
    <property type="evidence" value="ECO:0007669"/>
    <property type="project" value="UniProtKB-UniRule"/>
</dbReference>
<dbReference type="GO" id="GO:0003743">
    <property type="term" value="F:translation initiation factor activity"/>
    <property type="evidence" value="ECO:0007669"/>
    <property type="project" value="UniProtKB-UniRule"/>
</dbReference>
<dbReference type="CDD" id="cd01887">
    <property type="entry name" value="IF2_eIF5B"/>
    <property type="match status" value="1"/>
</dbReference>
<dbReference type="CDD" id="cd03702">
    <property type="entry name" value="IF2_mtIF2_II"/>
    <property type="match status" value="1"/>
</dbReference>
<dbReference type="CDD" id="cd03692">
    <property type="entry name" value="mtIF2_IVc"/>
    <property type="match status" value="1"/>
</dbReference>
<dbReference type="FunFam" id="1.10.10.2480:FF:000003">
    <property type="entry name" value="Translation initiation factor IF-2"/>
    <property type="match status" value="1"/>
</dbReference>
<dbReference type="FunFam" id="2.40.30.10:FF:000007">
    <property type="entry name" value="Translation initiation factor IF-2"/>
    <property type="match status" value="1"/>
</dbReference>
<dbReference type="FunFam" id="2.40.30.10:FF:000008">
    <property type="entry name" value="Translation initiation factor IF-2"/>
    <property type="match status" value="1"/>
</dbReference>
<dbReference type="FunFam" id="3.40.50.10050:FF:000001">
    <property type="entry name" value="Translation initiation factor IF-2"/>
    <property type="match status" value="1"/>
</dbReference>
<dbReference type="FunFam" id="3.40.50.300:FF:000019">
    <property type="entry name" value="Translation initiation factor IF-2"/>
    <property type="match status" value="1"/>
</dbReference>
<dbReference type="Gene3D" id="1.10.10.2480">
    <property type="match status" value="1"/>
</dbReference>
<dbReference type="Gene3D" id="3.40.50.300">
    <property type="entry name" value="P-loop containing nucleotide triphosphate hydrolases"/>
    <property type="match status" value="1"/>
</dbReference>
<dbReference type="Gene3D" id="2.40.30.10">
    <property type="entry name" value="Translation factors"/>
    <property type="match status" value="2"/>
</dbReference>
<dbReference type="Gene3D" id="3.40.50.10050">
    <property type="entry name" value="Translation initiation factor IF- 2, domain 3"/>
    <property type="match status" value="1"/>
</dbReference>
<dbReference type="HAMAP" id="MF_00100_B">
    <property type="entry name" value="IF_2_B"/>
    <property type="match status" value="1"/>
</dbReference>
<dbReference type="InterPro" id="IPR053905">
    <property type="entry name" value="EF-G-like_DII"/>
</dbReference>
<dbReference type="InterPro" id="IPR044145">
    <property type="entry name" value="IF2_II"/>
</dbReference>
<dbReference type="InterPro" id="IPR006847">
    <property type="entry name" value="IF2_N"/>
</dbReference>
<dbReference type="InterPro" id="IPR027417">
    <property type="entry name" value="P-loop_NTPase"/>
</dbReference>
<dbReference type="InterPro" id="IPR005225">
    <property type="entry name" value="Small_GTP-bd"/>
</dbReference>
<dbReference type="InterPro" id="IPR000795">
    <property type="entry name" value="T_Tr_GTP-bd_dom"/>
</dbReference>
<dbReference type="InterPro" id="IPR000178">
    <property type="entry name" value="TF_IF2_bacterial-like"/>
</dbReference>
<dbReference type="InterPro" id="IPR015760">
    <property type="entry name" value="TIF_IF2"/>
</dbReference>
<dbReference type="InterPro" id="IPR023115">
    <property type="entry name" value="TIF_IF2_dom3"/>
</dbReference>
<dbReference type="InterPro" id="IPR036925">
    <property type="entry name" value="TIF_IF2_dom3_sf"/>
</dbReference>
<dbReference type="InterPro" id="IPR009000">
    <property type="entry name" value="Transl_B-barrel_sf"/>
</dbReference>
<dbReference type="NCBIfam" id="TIGR00487">
    <property type="entry name" value="IF-2"/>
    <property type="match status" value="1"/>
</dbReference>
<dbReference type="NCBIfam" id="TIGR00231">
    <property type="entry name" value="small_GTP"/>
    <property type="match status" value="1"/>
</dbReference>
<dbReference type="PANTHER" id="PTHR43381:SF5">
    <property type="entry name" value="TR-TYPE G DOMAIN-CONTAINING PROTEIN"/>
    <property type="match status" value="1"/>
</dbReference>
<dbReference type="PANTHER" id="PTHR43381">
    <property type="entry name" value="TRANSLATION INITIATION FACTOR IF-2-RELATED"/>
    <property type="match status" value="1"/>
</dbReference>
<dbReference type="Pfam" id="PF22042">
    <property type="entry name" value="EF-G_D2"/>
    <property type="match status" value="1"/>
</dbReference>
<dbReference type="Pfam" id="PF00009">
    <property type="entry name" value="GTP_EFTU"/>
    <property type="match status" value="1"/>
</dbReference>
<dbReference type="Pfam" id="PF11987">
    <property type="entry name" value="IF-2"/>
    <property type="match status" value="1"/>
</dbReference>
<dbReference type="Pfam" id="PF04760">
    <property type="entry name" value="IF2_N"/>
    <property type="match status" value="2"/>
</dbReference>
<dbReference type="PRINTS" id="PR00315">
    <property type="entry name" value="ELONGATNFCT"/>
</dbReference>
<dbReference type="SUPFAM" id="SSF52156">
    <property type="entry name" value="Initiation factor IF2/eIF5b, domain 3"/>
    <property type="match status" value="1"/>
</dbReference>
<dbReference type="SUPFAM" id="SSF52540">
    <property type="entry name" value="P-loop containing nucleoside triphosphate hydrolases"/>
    <property type="match status" value="1"/>
</dbReference>
<dbReference type="SUPFAM" id="SSF50447">
    <property type="entry name" value="Translation proteins"/>
    <property type="match status" value="2"/>
</dbReference>
<dbReference type="PROSITE" id="PS51722">
    <property type="entry name" value="G_TR_2"/>
    <property type="match status" value="1"/>
</dbReference>
<dbReference type="PROSITE" id="PS01176">
    <property type="entry name" value="IF2"/>
    <property type="match status" value="1"/>
</dbReference>
<sequence length="900" mass="94041">MAAGKARVHELAKELGVTSKEVLARLSEQGEFVKSASSTVEAPVARRLRESFGGSKPAPAKGTAKSPGKGPDKSLDKALDAAIDMAAGNGKATAAPAKAADSGGAAIVSPTTPAAPEPPTAVPPSPQAPHPGMAPGARPGPVPKPGIRTPRVGNNPFSSAQPADRPIPRPPAPRPGTARPGVPRPGASPGSMPPRPGGAVGGARPPRPGAPRPGGRPGAPGAGRSDAGGGNYRGGGVGAAPGTGFRGRPGGGGGGRPGQRGGAAGAFGRPGGAPRRGRKSKRQKRQEYDSMQAPVVGGVRLPHGNGETIRLARGASLSDFADKIDANPAALVQALFNLGEMVTATQSVGDETLELLGSEMNYNVQVVSPEDEDRELLESFDLSYGEDEGGEEDLQVRPPVVTVMGHVDHGKTRLLDTIRKANVREAEAGGITQHIGAYQVAVDLDGSQRLITFIDTPGHEAFTAMRARGAKATDIAILVVAADDGVMPQTVEAINHAQAADVPIVVAVNKIDKEGADPAKIRGQLTEYGLVPEEFGGDTMFVDISAKQGTNIEALEEAVLLTADAALDLRANPDMEAQGVAIEAHLDRGRGPVATVLVQRGTLRVGDSVVAGDAYGRVRRMVDEHGEDVEVALPSRPVQVIGFTSVPGAGDNFLVVDEDRIARQIADRRSARKRNALAARSRKRISLEDLDSALKETSQLNLILKGDNAGTVEALEEALMGIQVDDEVVLRVIDRGVGGITETNVNLASASDAVIIGFNVRAEGKATELASREGVEIRYYSVIYQAIDEIEQALRGLLKPIYEENQLGRAEIRALFRSSKVGLIAGCLVTSGVMRRNAKARLLRDNIVVAENLSIASLRREKDDVTEVRDGFECGLTLGYADIKEGDVIESYELVQKERA</sequence>